<name>CLSA_ECO8A</name>
<protein>
    <recommendedName>
        <fullName evidence="1">Cardiolipin synthase A</fullName>
        <shortName evidence="1">CL synthase</shortName>
        <ecNumber evidence="1">2.7.8.-</ecNumber>
    </recommendedName>
</protein>
<sequence length="486" mass="54822">MTTVYTLVSWLAILGYWLLIAGVTLRILMKRRAVPSAMAWLLIIYILPLVGIIAYLAVGELHLGKRRAERARAMWPSTAKWLNDLKACKHIFAEENSSVAAPLFKLCERRQGIAGVKGNQLQLMTESDDVMQALIRDIQLARHNIEMVFYIWQPGGMADQVAESLMAAARRGIHCRLMLDSAGSVAFFRSPWPELMRNAGIEVVEALKVNLMRVFLRRMDLRQHRKMIMIDNYIAYTGSMNMVDPRYFKQDAGVGQWIDLMARMEGPIATAMGIIYSCDWEIETGKRILPPPPDVNIMPFEQASGHTIHTIASGPGFPEDLIHQALLTAAYSAREYLIMTTPYFVPSDDLLHAICTAAQRGVDVSIILPRKNDSMLVGWASRAFFTELLAAGVKIYQFEGGLLHTKSVLVDGELSLVGTVNLDMRSLWLNFEITLAIDDKGFGADLAAVQDDYISRSRLLDARLWLKRPLWQRVAERLFYFFSPLL</sequence>
<gene>
    <name evidence="1" type="primary">clsA</name>
    <name type="synonym">cls</name>
    <name type="ordered locus">ECIAI1_1268</name>
</gene>
<comment type="function">
    <text evidence="1">Catalyzes the reversible phosphatidyl group transfer from one phosphatidylglycerol molecule to another to form cardiolipin (CL) (diphosphatidylglycerol) and glycerol.</text>
</comment>
<comment type="catalytic activity">
    <reaction evidence="1">
        <text>2 a 1,2-diacyl-sn-glycero-3-phospho-(1'-sn-glycerol) = a cardiolipin + glycerol</text>
        <dbReference type="Rhea" id="RHEA:31451"/>
        <dbReference type="ChEBI" id="CHEBI:17754"/>
        <dbReference type="ChEBI" id="CHEBI:62237"/>
        <dbReference type="ChEBI" id="CHEBI:64716"/>
    </reaction>
</comment>
<comment type="subcellular location">
    <subcellularLocation>
        <location evidence="1">Cell inner membrane</location>
        <topology evidence="1">Multi-pass membrane protein</topology>
    </subcellularLocation>
</comment>
<comment type="similarity">
    <text evidence="1">Belongs to the phospholipase D family. Cardiolipin synthase subfamily. ClsA sub-subfamily.</text>
</comment>
<accession>B7LY04</accession>
<reference key="1">
    <citation type="journal article" date="2009" name="PLoS Genet.">
        <title>Organised genome dynamics in the Escherichia coli species results in highly diverse adaptive paths.</title>
        <authorList>
            <person name="Touchon M."/>
            <person name="Hoede C."/>
            <person name="Tenaillon O."/>
            <person name="Barbe V."/>
            <person name="Baeriswyl S."/>
            <person name="Bidet P."/>
            <person name="Bingen E."/>
            <person name="Bonacorsi S."/>
            <person name="Bouchier C."/>
            <person name="Bouvet O."/>
            <person name="Calteau A."/>
            <person name="Chiapello H."/>
            <person name="Clermont O."/>
            <person name="Cruveiller S."/>
            <person name="Danchin A."/>
            <person name="Diard M."/>
            <person name="Dossat C."/>
            <person name="Karoui M.E."/>
            <person name="Frapy E."/>
            <person name="Garry L."/>
            <person name="Ghigo J.M."/>
            <person name="Gilles A.M."/>
            <person name="Johnson J."/>
            <person name="Le Bouguenec C."/>
            <person name="Lescat M."/>
            <person name="Mangenot S."/>
            <person name="Martinez-Jehanne V."/>
            <person name="Matic I."/>
            <person name="Nassif X."/>
            <person name="Oztas S."/>
            <person name="Petit M.A."/>
            <person name="Pichon C."/>
            <person name="Rouy Z."/>
            <person name="Ruf C.S."/>
            <person name="Schneider D."/>
            <person name="Tourret J."/>
            <person name="Vacherie B."/>
            <person name="Vallenet D."/>
            <person name="Medigue C."/>
            <person name="Rocha E.P.C."/>
            <person name="Denamur E."/>
        </authorList>
    </citation>
    <scope>NUCLEOTIDE SEQUENCE [LARGE SCALE GENOMIC DNA]</scope>
    <source>
        <strain>IAI1</strain>
    </source>
</reference>
<evidence type="ECO:0000255" key="1">
    <source>
        <dbReference type="HAMAP-Rule" id="MF_00190"/>
    </source>
</evidence>
<proteinExistence type="inferred from homology"/>
<organism>
    <name type="scientific">Escherichia coli O8 (strain IAI1)</name>
    <dbReference type="NCBI Taxonomy" id="585034"/>
    <lineage>
        <taxon>Bacteria</taxon>
        <taxon>Pseudomonadati</taxon>
        <taxon>Pseudomonadota</taxon>
        <taxon>Gammaproteobacteria</taxon>
        <taxon>Enterobacterales</taxon>
        <taxon>Enterobacteriaceae</taxon>
        <taxon>Escherichia</taxon>
    </lineage>
</organism>
<dbReference type="EC" id="2.7.8.-" evidence="1"/>
<dbReference type="EMBL" id="CU928160">
    <property type="protein sequence ID" value="CAQ98127.1"/>
    <property type="molecule type" value="Genomic_DNA"/>
</dbReference>
<dbReference type="RefSeq" id="WP_000214516.1">
    <property type="nucleotide sequence ID" value="NC_011741.1"/>
</dbReference>
<dbReference type="SMR" id="B7LY04"/>
<dbReference type="GeneID" id="93775314"/>
<dbReference type="KEGG" id="ecr:ECIAI1_1268"/>
<dbReference type="HOGENOM" id="CLU_038053_1_0_6"/>
<dbReference type="GO" id="GO:0005886">
    <property type="term" value="C:plasma membrane"/>
    <property type="evidence" value="ECO:0007669"/>
    <property type="project" value="UniProtKB-SubCell"/>
</dbReference>
<dbReference type="GO" id="GO:0008808">
    <property type="term" value="F:cardiolipin synthase activity"/>
    <property type="evidence" value="ECO:0007669"/>
    <property type="project" value="InterPro"/>
</dbReference>
<dbReference type="GO" id="GO:0032049">
    <property type="term" value="P:cardiolipin biosynthetic process"/>
    <property type="evidence" value="ECO:0007669"/>
    <property type="project" value="InterPro"/>
</dbReference>
<dbReference type="CDD" id="cd09152">
    <property type="entry name" value="PLDc_EcCLS_like_1"/>
    <property type="match status" value="1"/>
</dbReference>
<dbReference type="CDD" id="cd09158">
    <property type="entry name" value="PLDc_EcCLS_like_2"/>
    <property type="match status" value="1"/>
</dbReference>
<dbReference type="FunFam" id="3.30.870.10:FF:000002">
    <property type="entry name" value="Cardiolipin synthase A"/>
    <property type="match status" value="1"/>
</dbReference>
<dbReference type="FunFam" id="3.30.870.10:FF:000003">
    <property type="entry name" value="Cardiolipin synthase A"/>
    <property type="match status" value="1"/>
</dbReference>
<dbReference type="Gene3D" id="3.30.870.10">
    <property type="entry name" value="Endonuclease Chain A"/>
    <property type="match status" value="2"/>
</dbReference>
<dbReference type="HAMAP" id="MF_00190">
    <property type="entry name" value="Cardiolipin_synth_ClsA"/>
    <property type="match status" value="1"/>
</dbReference>
<dbReference type="InterPro" id="IPR022924">
    <property type="entry name" value="Cardiolipin_synthase"/>
</dbReference>
<dbReference type="InterPro" id="IPR030840">
    <property type="entry name" value="CL_synthase_A"/>
</dbReference>
<dbReference type="InterPro" id="IPR027379">
    <property type="entry name" value="CLS_N"/>
</dbReference>
<dbReference type="InterPro" id="IPR025202">
    <property type="entry name" value="PLD-like_dom"/>
</dbReference>
<dbReference type="InterPro" id="IPR001736">
    <property type="entry name" value="PLipase_D/transphosphatidylase"/>
</dbReference>
<dbReference type="NCBIfam" id="TIGR04265">
    <property type="entry name" value="bac_cardiolipin"/>
    <property type="match status" value="1"/>
</dbReference>
<dbReference type="PANTHER" id="PTHR21248">
    <property type="entry name" value="CARDIOLIPIN SYNTHASE"/>
    <property type="match status" value="1"/>
</dbReference>
<dbReference type="PANTHER" id="PTHR21248:SF22">
    <property type="entry name" value="PHOSPHOLIPASE D"/>
    <property type="match status" value="1"/>
</dbReference>
<dbReference type="Pfam" id="PF13091">
    <property type="entry name" value="PLDc_2"/>
    <property type="match status" value="2"/>
</dbReference>
<dbReference type="Pfam" id="PF13396">
    <property type="entry name" value="PLDc_N"/>
    <property type="match status" value="1"/>
</dbReference>
<dbReference type="SMART" id="SM00155">
    <property type="entry name" value="PLDc"/>
    <property type="match status" value="2"/>
</dbReference>
<dbReference type="SUPFAM" id="SSF56024">
    <property type="entry name" value="Phospholipase D/nuclease"/>
    <property type="match status" value="2"/>
</dbReference>
<dbReference type="PROSITE" id="PS50035">
    <property type="entry name" value="PLD"/>
    <property type="match status" value="2"/>
</dbReference>
<keyword id="KW-0997">Cell inner membrane</keyword>
<keyword id="KW-1003">Cell membrane</keyword>
<keyword id="KW-0444">Lipid biosynthesis</keyword>
<keyword id="KW-0443">Lipid metabolism</keyword>
<keyword id="KW-0472">Membrane</keyword>
<keyword id="KW-0594">Phospholipid biosynthesis</keyword>
<keyword id="KW-1208">Phospholipid metabolism</keyword>
<keyword id="KW-0677">Repeat</keyword>
<keyword id="KW-0808">Transferase</keyword>
<keyword id="KW-0812">Transmembrane</keyword>
<keyword id="KW-1133">Transmembrane helix</keyword>
<feature type="chain" id="PRO_1000118588" description="Cardiolipin synthase A">
    <location>
        <begin position="1"/>
        <end position="486"/>
    </location>
</feature>
<feature type="transmembrane region" description="Helical" evidence="1">
    <location>
        <begin position="3"/>
        <end position="23"/>
    </location>
</feature>
<feature type="transmembrane region" description="Helical" evidence="1">
    <location>
        <begin position="38"/>
        <end position="58"/>
    </location>
</feature>
<feature type="domain" description="PLD phosphodiesterase 1" evidence="1">
    <location>
        <begin position="219"/>
        <end position="246"/>
    </location>
</feature>
<feature type="domain" description="PLD phosphodiesterase 2" evidence="1">
    <location>
        <begin position="399"/>
        <end position="426"/>
    </location>
</feature>
<feature type="active site" evidence="1">
    <location>
        <position position="224"/>
    </location>
</feature>
<feature type="active site" evidence="1">
    <location>
        <position position="226"/>
    </location>
</feature>
<feature type="active site" evidence="1">
    <location>
        <position position="231"/>
    </location>
</feature>
<feature type="active site" evidence="1">
    <location>
        <position position="404"/>
    </location>
</feature>
<feature type="active site" evidence="1">
    <location>
        <position position="406"/>
    </location>
</feature>
<feature type="active site" evidence="1">
    <location>
        <position position="411"/>
    </location>
</feature>